<accession>Q04D20</accession>
<gene>
    <name evidence="1" type="primary">tyrS</name>
    <name type="ordered locus">OEOE_1815</name>
</gene>
<keyword id="KW-0030">Aminoacyl-tRNA synthetase</keyword>
<keyword id="KW-0067">ATP-binding</keyword>
<keyword id="KW-0963">Cytoplasm</keyword>
<keyword id="KW-0436">Ligase</keyword>
<keyword id="KW-0547">Nucleotide-binding</keyword>
<keyword id="KW-0648">Protein biosynthesis</keyword>
<keyword id="KW-1185">Reference proteome</keyword>
<keyword id="KW-0694">RNA-binding</keyword>
<organism>
    <name type="scientific">Oenococcus oeni (strain ATCC BAA-331 / PSU-1)</name>
    <dbReference type="NCBI Taxonomy" id="203123"/>
    <lineage>
        <taxon>Bacteria</taxon>
        <taxon>Bacillati</taxon>
        <taxon>Bacillota</taxon>
        <taxon>Bacilli</taxon>
        <taxon>Lactobacillales</taxon>
        <taxon>Lactobacillaceae</taxon>
        <taxon>Oenococcus</taxon>
    </lineage>
</organism>
<reference key="1">
    <citation type="journal article" date="2006" name="Proc. Natl. Acad. Sci. U.S.A.">
        <title>Comparative genomics of the lactic acid bacteria.</title>
        <authorList>
            <person name="Makarova K.S."/>
            <person name="Slesarev A."/>
            <person name="Wolf Y.I."/>
            <person name="Sorokin A."/>
            <person name="Mirkin B."/>
            <person name="Koonin E.V."/>
            <person name="Pavlov A."/>
            <person name="Pavlova N."/>
            <person name="Karamychev V."/>
            <person name="Polouchine N."/>
            <person name="Shakhova V."/>
            <person name="Grigoriev I."/>
            <person name="Lou Y."/>
            <person name="Rohksar D."/>
            <person name="Lucas S."/>
            <person name="Huang K."/>
            <person name="Goodstein D.M."/>
            <person name="Hawkins T."/>
            <person name="Plengvidhya V."/>
            <person name="Welker D."/>
            <person name="Hughes J."/>
            <person name="Goh Y."/>
            <person name="Benson A."/>
            <person name="Baldwin K."/>
            <person name="Lee J.-H."/>
            <person name="Diaz-Muniz I."/>
            <person name="Dosti B."/>
            <person name="Smeianov V."/>
            <person name="Wechter W."/>
            <person name="Barabote R."/>
            <person name="Lorca G."/>
            <person name="Altermann E."/>
            <person name="Barrangou R."/>
            <person name="Ganesan B."/>
            <person name="Xie Y."/>
            <person name="Rawsthorne H."/>
            <person name="Tamir D."/>
            <person name="Parker C."/>
            <person name="Breidt F."/>
            <person name="Broadbent J.R."/>
            <person name="Hutkins R."/>
            <person name="O'Sullivan D."/>
            <person name="Steele J."/>
            <person name="Unlu G."/>
            <person name="Saier M.H. Jr."/>
            <person name="Klaenhammer T."/>
            <person name="Richardson P."/>
            <person name="Kozyavkin S."/>
            <person name="Weimer B.C."/>
            <person name="Mills D.A."/>
        </authorList>
    </citation>
    <scope>NUCLEOTIDE SEQUENCE [LARGE SCALE GENOMIC DNA]</scope>
    <source>
        <strain>ATCC BAA-331 / PSU-1</strain>
    </source>
</reference>
<comment type="function">
    <text evidence="1">Catalyzes the attachment of tyrosine to tRNA(Tyr) in a two-step reaction: tyrosine is first activated by ATP to form Tyr-AMP and then transferred to the acceptor end of tRNA(Tyr).</text>
</comment>
<comment type="catalytic activity">
    <reaction evidence="1">
        <text>tRNA(Tyr) + L-tyrosine + ATP = L-tyrosyl-tRNA(Tyr) + AMP + diphosphate + H(+)</text>
        <dbReference type="Rhea" id="RHEA:10220"/>
        <dbReference type="Rhea" id="RHEA-COMP:9706"/>
        <dbReference type="Rhea" id="RHEA-COMP:9707"/>
        <dbReference type="ChEBI" id="CHEBI:15378"/>
        <dbReference type="ChEBI" id="CHEBI:30616"/>
        <dbReference type="ChEBI" id="CHEBI:33019"/>
        <dbReference type="ChEBI" id="CHEBI:58315"/>
        <dbReference type="ChEBI" id="CHEBI:78442"/>
        <dbReference type="ChEBI" id="CHEBI:78536"/>
        <dbReference type="ChEBI" id="CHEBI:456215"/>
        <dbReference type="EC" id="6.1.1.1"/>
    </reaction>
</comment>
<comment type="subunit">
    <text evidence="1">Homodimer.</text>
</comment>
<comment type="subcellular location">
    <subcellularLocation>
        <location evidence="1">Cytoplasm</location>
    </subcellularLocation>
</comment>
<comment type="similarity">
    <text evidence="1">Belongs to the class-I aminoacyl-tRNA synthetase family. TyrS type 1 subfamily.</text>
</comment>
<sequence>MDIIEDLKWRGSIKQTTDESGLANLLKHKKISLYVGVDPTAKSIHIGNLIPLTILKRFQNAGHRPVIVVGGGTGMIGDPSGKASERKLLPKDVFDENVSRITKQMTRLFGKDGFEIVNNYDWLSKLDLISFLRDYGKLFSINVMLKRDVVASRLQAGISFTEFTYQILQAIDFYTLFKEKAVQLQVGGADQYGNISSGVELIHKLVGPDTEAFGLTVPLLLKSDGTKFGKSAGGAIWLDPEFLSPYEFYQFFYNQTDADVVKLLKIFTFLNREEIEELADKVKNEPEKREAQRRLAEEVTKFVHGQTAVEEAGKISRILFNGDVENLTASQVAVAFSGVPTIEVADQKTDVVELLVKDKVIEKSRRQAREDLKNGAITINGEKISNVNGVIDPTEKFDGRFIIIRRGKKKYFLAKVQ</sequence>
<proteinExistence type="inferred from homology"/>
<protein>
    <recommendedName>
        <fullName evidence="1">Tyrosine--tRNA ligase</fullName>
        <ecNumber evidence="1">6.1.1.1</ecNumber>
    </recommendedName>
    <alternativeName>
        <fullName evidence="1">Tyrosyl-tRNA synthetase</fullName>
        <shortName evidence="1">TyrRS</shortName>
    </alternativeName>
</protein>
<feature type="chain" id="PRO_1000189312" description="Tyrosine--tRNA ligase">
    <location>
        <begin position="1"/>
        <end position="417"/>
    </location>
</feature>
<feature type="domain" description="S4 RNA-binding" evidence="1">
    <location>
        <begin position="349"/>
        <end position="416"/>
    </location>
</feature>
<feature type="short sequence motif" description="'HIGH' region">
    <location>
        <begin position="39"/>
        <end position="48"/>
    </location>
</feature>
<feature type="short sequence motif" description="'KMSKS' region">
    <location>
        <begin position="227"/>
        <end position="231"/>
    </location>
</feature>
<feature type="binding site" evidence="1">
    <location>
        <position position="34"/>
    </location>
    <ligand>
        <name>L-tyrosine</name>
        <dbReference type="ChEBI" id="CHEBI:58315"/>
    </ligand>
</feature>
<feature type="binding site" evidence="1">
    <location>
        <position position="165"/>
    </location>
    <ligand>
        <name>L-tyrosine</name>
        <dbReference type="ChEBI" id="CHEBI:58315"/>
    </ligand>
</feature>
<feature type="binding site" evidence="1">
    <location>
        <position position="169"/>
    </location>
    <ligand>
        <name>L-tyrosine</name>
        <dbReference type="ChEBI" id="CHEBI:58315"/>
    </ligand>
</feature>
<feature type="binding site" evidence="1">
    <location>
        <position position="230"/>
    </location>
    <ligand>
        <name>ATP</name>
        <dbReference type="ChEBI" id="CHEBI:30616"/>
    </ligand>
</feature>
<dbReference type="EC" id="6.1.1.1" evidence="1"/>
<dbReference type="EMBL" id="CP000411">
    <property type="protein sequence ID" value="ABJ57652.1"/>
    <property type="molecule type" value="Genomic_DNA"/>
</dbReference>
<dbReference type="RefSeq" id="WP_011677847.1">
    <property type="nucleotide sequence ID" value="NC_008528.1"/>
</dbReference>
<dbReference type="SMR" id="Q04D20"/>
<dbReference type="STRING" id="203123.OEOE_1815"/>
<dbReference type="KEGG" id="ooe:OEOE_1815"/>
<dbReference type="PATRIC" id="fig|203123.7.peg.1856"/>
<dbReference type="eggNOG" id="COG0162">
    <property type="taxonomic scope" value="Bacteria"/>
</dbReference>
<dbReference type="HOGENOM" id="CLU_024003_0_3_9"/>
<dbReference type="Proteomes" id="UP000000774">
    <property type="component" value="Chromosome"/>
</dbReference>
<dbReference type="GO" id="GO:0005829">
    <property type="term" value="C:cytosol"/>
    <property type="evidence" value="ECO:0007669"/>
    <property type="project" value="TreeGrafter"/>
</dbReference>
<dbReference type="GO" id="GO:0005524">
    <property type="term" value="F:ATP binding"/>
    <property type="evidence" value="ECO:0007669"/>
    <property type="project" value="UniProtKB-UniRule"/>
</dbReference>
<dbReference type="GO" id="GO:0003723">
    <property type="term" value="F:RNA binding"/>
    <property type="evidence" value="ECO:0007669"/>
    <property type="project" value="UniProtKB-KW"/>
</dbReference>
<dbReference type="GO" id="GO:0004831">
    <property type="term" value="F:tyrosine-tRNA ligase activity"/>
    <property type="evidence" value="ECO:0007669"/>
    <property type="project" value="UniProtKB-UniRule"/>
</dbReference>
<dbReference type="GO" id="GO:0006437">
    <property type="term" value="P:tyrosyl-tRNA aminoacylation"/>
    <property type="evidence" value="ECO:0007669"/>
    <property type="project" value="UniProtKB-UniRule"/>
</dbReference>
<dbReference type="CDD" id="cd00165">
    <property type="entry name" value="S4"/>
    <property type="match status" value="1"/>
</dbReference>
<dbReference type="CDD" id="cd00805">
    <property type="entry name" value="TyrRS_core"/>
    <property type="match status" value="1"/>
</dbReference>
<dbReference type="FunFam" id="1.10.240.10:FF:000001">
    <property type="entry name" value="Tyrosine--tRNA ligase"/>
    <property type="match status" value="1"/>
</dbReference>
<dbReference type="Gene3D" id="3.40.50.620">
    <property type="entry name" value="HUPs"/>
    <property type="match status" value="1"/>
</dbReference>
<dbReference type="Gene3D" id="3.10.290.10">
    <property type="entry name" value="RNA-binding S4 domain"/>
    <property type="match status" value="1"/>
</dbReference>
<dbReference type="Gene3D" id="1.10.240.10">
    <property type="entry name" value="Tyrosyl-Transfer RNA Synthetase"/>
    <property type="match status" value="1"/>
</dbReference>
<dbReference type="HAMAP" id="MF_02006">
    <property type="entry name" value="Tyr_tRNA_synth_type1"/>
    <property type="match status" value="1"/>
</dbReference>
<dbReference type="InterPro" id="IPR001412">
    <property type="entry name" value="aa-tRNA-synth_I_CS"/>
</dbReference>
<dbReference type="InterPro" id="IPR002305">
    <property type="entry name" value="aa-tRNA-synth_Ic"/>
</dbReference>
<dbReference type="InterPro" id="IPR014729">
    <property type="entry name" value="Rossmann-like_a/b/a_fold"/>
</dbReference>
<dbReference type="InterPro" id="IPR036986">
    <property type="entry name" value="S4_RNA-bd_sf"/>
</dbReference>
<dbReference type="InterPro" id="IPR054608">
    <property type="entry name" value="SYY-like_C"/>
</dbReference>
<dbReference type="InterPro" id="IPR002307">
    <property type="entry name" value="Tyr-tRNA-ligase"/>
</dbReference>
<dbReference type="InterPro" id="IPR024088">
    <property type="entry name" value="Tyr-tRNA-ligase_bac-type"/>
</dbReference>
<dbReference type="InterPro" id="IPR024107">
    <property type="entry name" value="Tyr-tRNA-ligase_bac_1"/>
</dbReference>
<dbReference type="NCBIfam" id="TIGR00234">
    <property type="entry name" value="tyrS"/>
    <property type="match status" value="1"/>
</dbReference>
<dbReference type="PANTHER" id="PTHR11766:SF0">
    <property type="entry name" value="TYROSINE--TRNA LIGASE, MITOCHONDRIAL"/>
    <property type="match status" value="1"/>
</dbReference>
<dbReference type="PANTHER" id="PTHR11766">
    <property type="entry name" value="TYROSYL-TRNA SYNTHETASE"/>
    <property type="match status" value="1"/>
</dbReference>
<dbReference type="Pfam" id="PF22421">
    <property type="entry name" value="SYY_C-terminal"/>
    <property type="match status" value="1"/>
</dbReference>
<dbReference type="Pfam" id="PF00579">
    <property type="entry name" value="tRNA-synt_1b"/>
    <property type="match status" value="1"/>
</dbReference>
<dbReference type="PRINTS" id="PR01040">
    <property type="entry name" value="TRNASYNTHTYR"/>
</dbReference>
<dbReference type="SUPFAM" id="SSF55174">
    <property type="entry name" value="Alpha-L RNA-binding motif"/>
    <property type="match status" value="1"/>
</dbReference>
<dbReference type="SUPFAM" id="SSF52374">
    <property type="entry name" value="Nucleotidylyl transferase"/>
    <property type="match status" value="1"/>
</dbReference>
<dbReference type="PROSITE" id="PS00178">
    <property type="entry name" value="AA_TRNA_LIGASE_I"/>
    <property type="match status" value="1"/>
</dbReference>
<dbReference type="PROSITE" id="PS50889">
    <property type="entry name" value="S4"/>
    <property type="match status" value="1"/>
</dbReference>
<name>SYY_OENOB</name>
<evidence type="ECO:0000255" key="1">
    <source>
        <dbReference type="HAMAP-Rule" id="MF_02006"/>
    </source>
</evidence>